<feature type="chain" id="PRO_1000133098" description="Phosphopentomutase">
    <location>
        <begin position="1"/>
        <end position="407"/>
    </location>
</feature>
<feature type="binding site" evidence="1">
    <location>
        <position position="10"/>
    </location>
    <ligand>
        <name>Mn(2+)</name>
        <dbReference type="ChEBI" id="CHEBI:29035"/>
        <label>1</label>
    </ligand>
</feature>
<feature type="binding site" evidence="1">
    <location>
        <position position="306"/>
    </location>
    <ligand>
        <name>Mn(2+)</name>
        <dbReference type="ChEBI" id="CHEBI:29035"/>
        <label>2</label>
    </ligand>
</feature>
<feature type="binding site" evidence="1">
    <location>
        <position position="311"/>
    </location>
    <ligand>
        <name>Mn(2+)</name>
        <dbReference type="ChEBI" id="CHEBI:29035"/>
        <label>2</label>
    </ligand>
</feature>
<feature type="binding site" evidence="1">
    <location>
        <position position="347"/>
    </location>
    <ligand>
        <name>Mn(2+)</name>
        <dbReference type="ChEBI" id="CHEBI:29035"/>
        <label>1</label>
    </ligand>
</feature>
<feature type="binding site" evidence="1">
    <location>
        <position position="348"/>
    </location>
    <ligand>
        <name>Mn(2+)</name>
        <dbReference type="ChEBI" id="CHEBI:29035"/>
        <label>1</label>
    </ligand>
</feature>
<feature type="binding site" evidence="1">
    <location>
        <position position="359"/>
    </location>
    <ligand>
        <name>Mn(2+)</name>
        <dbReference type="ChEBI" id="CHEBI:29035"/>
        <label>2</label>
    </ligand>
</feature>
<comment type="function">
    <text evidence="1">Isomerase that catalyzes the conversion of deoxy-ribose 1-phosphate (dRib-1-P) and ribose 1-phosphate (Rib-1-P) to deoxy-ribose 5-phosphate (dRib-5-P) and ribose 5-phosphate (Rib-5-P), respectively.</text>
</comment>
<comment type="catalytic activity">
    <reaction evidence="1">
        <text>2-deoxy-alpha-D-ribose 1-phosphate = 2-deoxy-D-ribose 5-phosphate</text>
        <dbReference type="Rhea" id="RHEA:27658"/>
        <dbReference type="ChEBI" id="CHEBI:57259"/>
        <dbReference type="ChEBI" id="CHEBI:62877"/>
        <dbReference type="EC" id="5.4.2.7"/>
    </reaction>
</comment>
<comment type="catalytic activity">
    <reaction evidence="1">
        <text>alpha-D-ribose 1-phosphate = D-ribose 5-phosphate</text>
        <dbReference type="Rhea" id="RHEA:18793"/>
        <dbReference type="ChEBI" id="CHEBI:57720"/>
        <dbReference type="ChEBI" id="CHEBI:78346"/>
        <dbReference type="EC" id="5.4.2.7"/>
    </reaction>
</comment>
<comment type="cofactor">
    <cofactor evidence="1">
        <name>Mn(2+)</name>
        <dbReference type="ChEBI" id="CHEBI:29035"/>
    </cofactor>
    <text evidence="1">Binds 2 manganese ions.</text>
</comment>
<comment type="pathway">
    <text evidence="1">Carbohydrate degradation; 2-deoxy-D-ribose 1-phosphate degradation; D-glyceraldehyde 3-phosphate and acetaldehyde from 2-deoxy-alpha-D-ribose 1-phosphate: step 1/2.</text>
</comment>
<comment type="subcellular location">
    <subcellularLocation>
        <location evidence="1">Cytoplasm</location>
    </subcellularLocation>
</comment>
<comment type="similarity">
    <text evidence="1">Belongs to the phosphopentomutase family.</text>
</comment>
<keyword id="KW-0963">Cytoplasm</keyword>
<keyword id="KW-0413">Isomerase</keyword>
<keyword id="KW-0464">Manganese</keyword>
<keyword id="KW-0479">Metal-binding</keyword>
<name>DEOB_SALPK</name>
<gene>
    <name evidence="1" type="primary">deoB</name>
    <name type="ordered locus">SSPA4068</name>
</gene>
<protein>
    <recommendedName>
        <fullName evidence="1">Phosphopentomutase</fullName>
        <ecNumber evidence="1">5.4.2.7</ecNumber>
    </recommendedName>
    <alternativeName>
        <fullName evidence="1">Phosphodeoxyribomutase</fullName>
    </alternativeName>
</protein>
<sequence length="407" mass="44304">MKRAFIMVLDSFGIGATEDADRFGDVGSDTLGHIAEACAKGEADNGRKGPLNLPNLTRLGLVKAYEGSTGKIAAGMDGNADVIGAYAWAHELSSGKDTPSGHWEIAGVPVLFDWGYFSDHENSFPQELLDKLVKRANLPGYLGNCHSSGTVILDQFGEEHMKTGKPIFYTSADSVFQIACHEETFGLDKLYELCEIAREELTEGGYNIGRVIARPFIGDKAGNFQRTGNRHDLAVEPPAPTVLQKLVDEKQGHVVSVGKIADIYANCGITKKVKATGLDALFDATLKEMKEAGDKTIVFTNFVDFDSSWGHRRDIAGYAAGLELFDRRLPELMELVGEDDILILTADHGCDPSWTGTDHTREHIPVLIYGPKVKPGSLGHRETFADIGQTLATYFGTSPMDYGKNML</sequence>
<reference key="1">
    <citation type="journal article" date="2009" name="BMC Genomics">
        <title>Pseudogene accumulation in the evolutionary histories of Salmonella enterica serovars Paratyphi A and Typhi.</title>
        <authorList>
            <person name="Holt K.E."/>
            <person name="Thomson N.R."/>
            <person name="Wain J."/>
            <person name="Langridge G.C."/>
            <person name="Hasan R."/>
            <person name="Bhutta Z.A."/>
            <person name="Quail M.A."/>
            <person name="Norbertczak H."/>
            <person name="Walker D."/>
            <person name="Simmonds M."/>
            <person name="White B."/>
            <person name="Bason N."/>
            <person name="Mungall K."/>
            <person name="Dougan G."/>
            <person name="Parkhill J."/>
        </authorList>
    </citation>
    <scope>NUCLEOTIDE SEQUENCE [LARGE SCALE GENOMIC DNA]</scope>
    <source>
        <strain>AKU_12601</strain>
    </source>
</reference>
<proteinExistence type="inferred from homology"/>
<accession>B5BAJ9</accession>
<organism>
    <name type="scientific">Salmonella paratyphi A (strain AKU_12601)</name>
    <dbReference type="NCBI Taxonomy" id="554290"/>
    <lineage>
        <taxon>Bacteria</taxon>
        <taxon>Pseudomonadati</taxon>
        <taxon>Pseudomonadota</taxon>
        <taxon>Gammaproteobacteria</taxon>
        <taxon>Enterobacterales</taxon>
        <taxon>Enterobacteriaceae</taxon>
        <taxon>Salmonella</taxon>
    </lineage>
</organism>
<evidence type="ECO:0000255" key="1">
    <source>
        <dbReference type="HAMAP-Rule" id="MF_00740"/>
    </source>
</evidence>
<dbReference type="EC" id="5.4.2.7" evidence="1"/>
<dbReference type="EMBL" id="FM200053">
    <property type="protein sequence ID" value="CAR62365.1"/>
    <property type="molecule type" value="Genomic_DNA"/>
</dbReference>
<dbReference type="RefSeq" id="WP_000816457.1">
    <property type="nucleotide sequence ID" value="NC_011147.1"/>
</dbReference>
<dbReference type="SMR" id="B5BAJ9"/>
<dbReference type="KEGG" id="sek:SSPA4068"/>
<dbReference type="HOGENOM" id="CLU_053861_0_0_6"/>
<dbReference type="UniPathway" id="UPA00002">
    <property type="reaction ID" value="UER00467"/>
</dbReference>
<dbReference type="Proteomes" id="UP000001869">
    <property type="component" value="Chromosome"/>
</dbReference>
<dbReference type="GO" id="GO:0005829">
    <property type="term" value="C:cytosol"/>
    <property type="evidence" value="ECO:0007669"/>
    <property type="project" value="TreeGrafter"/>
</dbReference>
<dbReference type="GO" id="GO:0000287">
    <property type="term" value="F:magnesium ion binding"/>
    <property type="evidence" value="ECO:0007669"/>
    <property type="project" value="InterPro"/>
</dbReference>
<dbReference type="GO" id="GO:0030145">
    <property type="term" value="F:manganese ion binding"/>
    <property type="evidence" value="ECO:0007669"/>
    <property type="project" value="UniProtKB-UniRule"/>
</dbReference>
<dbReference type="GO" id="GO:0008973">
    <property type="term" value="F:phosphopentomutase activity"/>
    <property type="evidence" value="ECO:0007669"/>
    <property type="project" value="UniProtKB-UniRule"/>
</dbReference>
<dbReference type="GO" id="GO:0006018">
    <property type="term" value="P:2-deoxyribose 1-phosphate catabolic process"/>
    <property type="evidence" value="ECO:0007669"/>
    <property type="project" value="UniProtKB-UniRule"/>
</dbReference>
<dbReference type="GO" id="GO:0006015">
    <property type="term" value="P:5-phosphoribose 1-diphosphate biosynthetic process"/>
    <property type="evidence" value="ECO:0007669"/>
    <property type="project" value="UniProtKB-UniPathway"/>
</dbReference>
<dbReference type="GO" id="GO:0043094">
    <property type="term" value="P:metabolic compound salvage"/>
    <property type="evidence" value="ECO:0007669"/>
    <property type="project" value="InterPro"/>
</dbReference>
<dbReference type="GO" id="GO:0009117">
    <property type="term" value="P:nucleotide metabolic process"/>
    <property type="evidence" value="ECO:0007669"/>
    <property type="project" value="InterPro"/>
</dbReference>
<dbReference type="CDD" id="cd16009">
    <property type="entry name" value="PPM"/>
    <property type="match status" value="1"/>
</dbReference>
<dbReference type="FunFam" id="3.30.70.1250:FF:000001">
    <property type="entry name" value="Phosphopentomutase"/>
    <property type="match status" value="1"/>
</dbReference>
<dbReference type="Gene3D" id="3.40.720.10">
    <property type="entry name" value="Alkaline Phosphatase, subunit A"/>
    <property type="match status" value="1"/>
</dbReference>
<dbReference type="Gene3D" id="3.30.70.1250">
    <property type="entry name" value="Phosphopentomutase"/>
    <property type="match status" value="1"/>
</dbReference>
<dbReference type="HAMAP" id="MF_00740">
    <property type="entry name" value="Phosphopentomut"/>
    <property type="match status" value="1"/>
</dbReference>
<dbReference type="InterPro" id="IPR017850">
    <property type="entry name" value="Alkaline_phosphatase_core_sf"/>
</dbReference>
<dbReference type="InterPro" id="IPR010045">
    <property type="entry name" value="DeoB"/>
</dbReference>
<dbReference type="InterPro" id="IPR006124">
    <property type="entry name" value="Metalloenzyme"/>
</dbReference>
<dbReference type="InterPro" id="IPR024052">
    <property type="entry name" value="Phosphopentomutase_DeoB_cap_sf"/>
</dbReference>
<dbReference type="NCBIfam" id="TIGR01696">
    <property type="entry name" value="deoB"/>
    <property type="match status" value="1"/>
</dbReference>
<dbReference type="NCBIfam" id="NF003766">
    <property type="entry name" value="PRK05362.1"/>
    <property type="match status" value="1"/>
</dbReference>
<dbReference type="PANTHER" id="PTHR21110">
    <property type="entry name" value="PHOSPHOPENTOMUTASE"/>
    <property type="match status" value="1"/>
</dbReference>
<dbReference type="PANTHER" id="PTHR21110:SF0">
    <property type="entry name" value="PHOSPHOPENTOMUTASE"/>
    <property type="match status" value="1"/>
</dbReference>
<dbReference type="Pfam" id="PF01676">
    <property type="entry name" value="Metalloenzyme"/>
    <property type="match status" value="1"/>
</dbReference>
<dbReference type="PIRSF" id="PIRSF001491">
    <property type="entry name" value="Ppentomutase"/>
    <property type="match status" value="1"/>
</dbReference>
<dbReference type="SUPFAM" id="SSF53649">
    <property type="entry name" value="Alkaline phosphatase-like"/>
    <property type="match status" value="1"/>
</dbReference>
<dbReference type="SUPFAM" id="SSF143856">
    <property type="entry name" value="DeoB insert domain-like"/>
    <property type="match status" value="1"/>
</dbReference>